<keyword id="KW-0028">Amino-acid biosynthesis</keyword>
<keyword id="KW-0057">Aromatic amino acid biosynthesis</keyword>
<keyword id="KW-0328">Glycosyltransferase</keyword>
<keyword id="KW-0460">Magnesium</keyword>
<keyword id="KW-0479">Metal-binding</keyword>
<keyword id="KW-1185">Reference proteome</keyword>
<keyword id="KW-0808">Transferase</keyword>
<keyword id="KW-0822">Tryptophan biosynthesis</keyword>
<feature type="chain" id="PRO_0000154426" description="Anthranilate phosphoribosyltransferase">
    <location>
        <begin position="1"/>
        <end position="342"/>
    </location>
</feature>
<feature type="binding site" evidence="1">
    <location>
        <position position="80"/>
    </location>
    <ligand>
        <name>5-phospho-alpha-D-ribose 1-diphosphate</name>
        <dbReference type="ChEBI" id="CHEBI:58017"/>
    </ligand>
</feature>
<feature type="binding site" evidence="1">
    <location>
        <position position="80"/>
    </location>
    <ligand>
        <name>anthranilate</name>
        <dbReference type="ChEBI" id="CHEBI:16567"/>
        <label>1</label>
    </ligand>
</feature>
<feature type="binding site" evidence="1">
    <location>
        <begin position="83"/>
        <end position="84"/>
    </location>
    <ligand>
        <name>5-phospho-alpha-D-ribose 1-diphosphate</name>
        <dbReference type="ChEBI" id="CHEBI:58017"/>
    </ligand>
</feature>
<feature type="binding site" evidence="1">
    <location>
        <position position="88"/>
    </location>
    <ligand>
        <name>5-phospho-alpha-D-ribose 1-diphosphate</name>
        <dbReference type="ChEBI" id="CHEBI:58017"/>
    </ligand>
</feature>
<feature type="binding site" evidence="1">
    <location>
        <begin position="90"/>
        <end position="93"/>
    </location>
    <ligand>
        <name>5-phospho-alpha-D-ribose 1-diphosphate</name>
        <dbReference type="ChEBI" id="CHEBI:58017"/>
    </ligand>
</feature>
<feature type="binding site" evidence="1">
    <location>
        <position position="92"/>
    </location>
    <ligand>
        <name>Mg(2+)</name>
        <dbReference type="ChEBI" id="CHEBI:18420"/>
        <label>1</label>
    </ligand>
</feature>
<feature type="binding site" evidence="1">
    <location>
        <begin position="108"/>
        <end position="116"/>
    </location>
    <ligand>
        <name>5-phospho-alpha-D-ribose 1-diphosphate</name>
        <dbReference type="ChEBI" id="CHEBI:58017"/>
    </ligand>
</feature>
<feature type="binding site" evidence="1">
    <location>
        <position position="111"/>
    </location>
    <ligand>
        <name>anthranilate</name>
        <dbReference type="ChEBI" id="CHEBI:16567"/>
        <label>1</label>
    </ligand>
</feature>
<feature type="binding site" evidence="1">
    <location>
        <position position="120"/>
    </location>
    <ligand>
        <name>5-phospho-alpha-D-ribose 1-diphosphate</name>
        <dbReference type="ChEBI" id="CHEBI:58017"/>
    </ligand>
</feature>
<feature type="binding site" evidence="1">
    <location>
        <position position="166"/>
    </location>
    <ligand>
        <name>anthranilate</name>
        <dbReference type="ChEBI" id="CHEBI:16567"/>
        <label>2</label>
    </ligand>
</feature>
<feature type="binding site" evidence="1">
    <location>
        <position position="225"/>
    </location>
    <ligand>
        <name>Mg(2+)</name>
        <dbReference type="ChEBI" id="CHEBI:18420"/>
        <label>2</label>
    </ligand>
</feature>
<feature type="binding site" evidence="1">
    <location>
        <position position="226"/>
    </location>
    <ligand>
        <name>Mg(2+)</name>
        <dbReference type="ChEBI" id="CHEBI:18420"/>
        <label>1</label>
    </ligand>
</feature>
<feature type="binding site" evidence="1">
    <location>
        <position position="226"/>
    </location>
    <ligand>
        <name>Mg(2+)</name>
        <dbReference type="ChEBI" id="CHEBI:18420"/>
        <label>2</label>
    </ligand>
</feature>
<comment type="function">
    <text evidence="1">Catalyzes the transfer of the phosphoribosyl group of 5-phosphorylribose-1-pyrophosphate (PRPP) to anthranilate to yield N-(5'-phosphoribosyl)-anthranilate (PRA).</text>
</comment>
<comment type="catalytic activity">
    <reaction evidence="1">
        <text>N-(5-phospho-beta-D-ribosyl)anthranilate + diphosphate = 5-phospho-alpha-D-ribose 1-diphosphate + anthranilate</text>
        <dbReference type="Rhea" id="RHEA:11768"/>
        <dbReference type="ChEBI" id="CHEBI:16567"/>
        <dbReference type="ChEBI" id="CHEBI:18277"/>
        <dbReference type="ChEBI" id="CHEBI:33019"/>
        <dbReference type="ChEBI" id="CHEBI:58017"/>
        <dbReference type="EC" id="2.4.2.18"/>
    </reaction>
</comment>
<comment type="cofactor">
    <cofactor evidence="1">
        <name>Mg(2+)</name>
        <dbReference type="ChEBI" id="CHEBI:18420"/>
    </cofactor>
    <text evidence="1">Binds 2 magnesium ions per monomer.</text>
</comment>
<comment type="pathway">
    <text evidence="1">Amino-acid biosynthesis; L-tryptophan biosynthesis; L-tryptophan from chorismate: step 2/5.</text>
</comment>
<comment type="subunit">
    <text evidence="1">Homodimer.</text>
</comment>
<comment type="similarity">
    <text evidence="1">Belongs to the anthranilate phosphoribosyltransferase family.</text>
</comment>
<reference key="1">
    <citation type="journal article" date="2000" name="Nucleic Acids Res.">
        <title>Complete genome sequence of the alkaliphilic bacterium Bacillus halodurans and genomic sequence comparison with Bacillus subtilis.</title>
        <authorList>
            <person name="Takami H."/>
            <person name="Nakasone K."/>
            <person name="Takaki Y."/>
            <person name="Maeno G."/>
            <person name="Sasaki R."/>
            <person name="Masui N."/>
            <person name="Fuji F."/>
            <person name="Hirama C."/>
            <person name="Nakamura Y."/>
            <person name="Ogasawara N."/>
            <person name="Kuhara S."/>
            <person name="Horikoshi K."/>
        </authorList>
    </citation>
    <scope>NUCLEOTIDE SEQUENCE [LARGE SCALE GENOMIC DNA]</scope>
    <source>
        <strain>ATCC BAA-125 / DSM 18197 / FERM 7344 / JCM 9153 / C-125</strain>
    </source>
</reference>
<gene>
    <name evidence="1" type="primary">trpD</name>
    <name type="ordered locus">BH1660</name>
</gene>
<dbReference type="EC" id="2.4.2.18" evidence="1"/>
<dbReference type="EMBL" id="BA000004">
    <property type="protein sequence ID" value="BAB05379.1"/>
    <property type="molecule type" value="Genomic_DNA"/>
</dbReference>
<dbReference type="PIR" id="D83857">
    <property type="entry name" value="D83857"/>
</dbReference>
<dbReference type="RefSeq" id="WP_010897822.1">
    <property type="nucleotide sequence ID" value="NC_002570.2"/>
</dbReference>
<dbReference type="SMR" id="Q9KCB3"/>
<dbReference type="STRING" id="272558.gene:10727558"/>
<dbReference type="KEGG" id="bha:BH1660"/>
<dbReference type="eggNOG" id="COG0547">
    <property type="taxonomic scope" value="Bacteria"/>
</dbReference>
<dbReference type="HOGENOM" id="CLU_034315_2_1_9"/>
<dbReference type="OrthoDB" id="9806430at2"/>
<dbReference type="UniPathway" id="UPA00035">
    <property type="reaction ID" value="UER00041"/>
</dbReference>
<dbReference type="Proteomes" id="UP000001258">
    <property type="component" value="Chromosome"/>
</dbReference>
<dbReference type="GO" id="GO:0005829">
    <property type="term" value="C:cytosol"/>
    <property type="evidence" value="ECO:0007669"/>
    <property type="project" value="TreeGrafter"/>
</dbReference>
<dbReference type="GO" id="GO:0004048">
    <property type="term" value="F:anthranilate phosphoribosyltransferase activity"/>
    <property type="evidence" value="ECO:0007669"/>
    <property type="project" value="UniProtKB-UniRule"/>
</dbReference>
<dbReference type="GO" id="GO:0000287">
    <property type="term" value="F:magnesium ion binding"/>
    <property type="evidence" value="ECO:0007669"/>
    <property type="project" value="UniProtKB-UniRule"/>
</dbReference>
<dbReference type="GO" id="GO:0000162">
    <property type="term" value="P:L-tryptophan biosynthetic process"/>
    <property type="evidence" value="ECO:0007669"/>
    <property type="project" value="UniProtKB-UniRule"/>
</dbReference>
<dbReference type="FunFam" id="3.40.1030.10:FF:000002">
    <property type="entry name" value="Anthranilate phosphoribosyltransferase"/>
    <property type="match status" value="1"/>
</dbReference>
<dbReference type="Gene3D" id="3.40.1030.10">
    <property type="entry name" value="Nucleoside phosphorylase/phosphoribosyltransferase catalytic domain"/>
    <property type="match status" value="1"/>
</dbReference>
<dbReference type="Gene3D" id="1.20.970.10">
    <property type="entry name" value="Transferase, Pyrimidine Nucleoside Phosphorylase, Chain C"/>
    <property type="match status" value="1"/>
</dbReference>
<dbReference type="HAMAP" id="MF_00211">
    <property type="entry name" value="TrpD"/>
    <property type="match status" value="1"/>
</dbReference>
<dbReference type="InterPro" id="IPR005940">
    <property type="entry name" value="Anthranilate_Pribosyl_Tfrase"/>
</dbReference>
<dbReference type="InterPro" id="IPR000312">
    <property type="entry name" value="Glycosyl_Trfase_fam3"/>
</dbReference>
<dbReference type="InterPro" id="IPR017459">
    <property type="entry name" value="Glycosyl_Trfase_fam3_N_dom"/>
</dbReference>
<dbReference type="InterPro" id="IPR036320">
    <property type="entry name" value="Glycosyl_Trfase_fam3_N_dom_sf"/>
</dbReference>
<dbReference type="InterPro" id="IPR035902">
    <property type="entry name" value="Nuc_phospho_transferase"/>
</dbReference>
<dbReference type="NCBIfam" id="TIGR01245">
    <property type="entry name" value="trpD"/>
    <property type="match status" value="1"/>
</dbReference>
<dbReference type="PANTHER" id="PTHR43285">
    <property type="entry name" value="ANTHRANILATE PHOSPHORIBOSYLTRANSFERASE"/>
    <property type="match status" value="1"/>
</dbReference>
<dbReference type="PANTHER" id="PTHR43285:SF2">
    <property type="entry name" value="ANTHRANILATE PHOSPHORIBOSYLTRANSFERASE"/>
    <property type="match status" value="1"/>
</dbReference>
<dbReference type="Pfam" id="PF02885">
    <property type="entry name" value="Glycos_trans_3N"/>
    <property type="match status" value="1"/>
</dbReference>
<dbReference type="Pfam" id="PF00591">
    <property type="entry name" value="Glycos_transf_3"/>
    <property type="match status" value="1"/>
</dbReference>
<dbReference type="SUPFAM" id="SSF52418">
    <property type="entry name" value="Nucleoside phosphorylase/phosphoribosyltransferase catalytic domain"/>
    <property type="match status" value="1"/>
</dbReference>
<dbReference type="SUPFAM" id="SSF47648">
    <property type="entry name" value="Nucleoside phosphorylase/phosphoribosyltransferase N-terminal domain"/>
    <property type="match status" value="1"/>
</dbReference>
<protein>
    <recommendedName>
        <fullName evidence="1">Anthranilate phosphoribosyltransferase</fullName>
        <ecNumber evidence="1">2.4.2.18</ecNumber>
    </recommendedName>
</protein>
<accession>Q9KCB3</accession>
<proteinExistence type="inferred from homology"/>
<evidence type="ECO:0000255" key="1">
    <source>
        <dbReference type="HAMAP-Rule" id="MF_00211"/>
    </source>
</evidence>
<organism>
    <name type="scientific">Halalkalibacterium halodurans (strain ATCC BAA-125 / DSM 18197 / FERM 7344 / JCM 9153 / C-125)</name>
    <name type="common">Bacillus halodurans</name>
    <dbReference type="NCBI Taxonomy" id="272558"/>
    <lineage>
        <taxon>Bacteria</taxon>
        <taxon>Bacillati</taxon>
        <taxon>Bacillota</taxon>
        <taxon>Bacilli</taxon>
        <taxon>Bacillales</taxon>
        <taxon>Bacillaceae</taxon>
        <taxon>Halalkalibacterium (ex Joshi et al. 2022)</taxon>
    </lineage>
</organism>
<sequence length="342" mass="36788">MFKETLRECMEGHTLAERKAEQVMDAIMKGEATASQIASLLTVLRFRGETVAEMTGFARAMRRHSIQIEHSFSQVVDTCGTGGDDVGTFNISTATALLVSALGVPVAKHGNRAVSSKSGSADVLEALQIPIQSSPEEATASLQKHNMCFMFAPLYHVAMKHAVAPRKEIGFRTIFNLLGPLTNPARAEHQLIGVYDRNFAEKMAETLRRLGTKHSLLVAGHGGLDELSITGPSTVFEVKGDAIDRYELIPEDVGLERGDLAQIQVSTVQESATLIDQVLIGKANKSAQQIVLLNAGAALYAADRVDSIKAGVALAKEGIASGHVADHVRNLRQTDQEAEQHA</sequence>
<name>TRPD_HALH5</name>